<dbReference type="EC" id="6.1.1.3" evidence="1"/>
<dbReference type="EMBL" id="CP001120">
    <property type="protein sequence ID" value="ACF66844.1"/>
    <property type="molecule type" value="Genomic_DNA"/>
</dbReference>
<dbReference type="RefSeq" id="WP_001144223.1">
    <property type="nucleotide sequence ID" value="NC_011083.1"/>
</dbReference>
<dbReference type="SMR" id="B4TGH1"/>
<dbReference type="KEGG" id="seh:SeHA_C1461"/>
<dbReference type="HOGENOM" id="CLU_008554_0_1_6"/>
<dbReference type="Proteomes" id="UP000001866">
    <property type="component" value="Chromosome"/>
</dbReference>
<dbReference type="GO" id="GO:0005829">
    <property type="term" value="C:cytosol"/>
    <property type="evidence" value="ECO:0007669"/>
    <property type="project" value="TreeGrafter"/>
</dbReference>
<dbReference type="GO" id="GO:0005524">
    <property type="term" value="F:ATP binding"/>
    <property type="evidence" value="ECO:0007669"/>
    <property type="project" value="UniProtKB-UniRule"/>
</dbReference>
<dbReference type="GO" id="GO:0046872">
    <property type="term" value="F:metal ion binding"/>
    <property type="evidence" value="ECO:0007669"/>
    <property type="project" value="UniProtKB-KW"/>
</dbReference>
<dbReference type="GO" id="GO:0004829">
    <property type="term" value="F:threonine-tRNA ligase activity"/>
    <property type="evidence" value="ECO:0007669"/>
    <property type="project" value="UniProtKB-UniRule"/>
</dbReference>
<dbReference type="GO" id="GO:0000049">
    <property type="term" value="F:tRNA binding"/>
    <property type="evidence" value="ECO:0007669"/>
    <property type="project" value="UniProtKB-KW"/>
</dbReference>
<dbReference type="GO" id="GO:0006435">
    <property type="term" value="P:threonyl-tRNA aminoacylation"/>
    <property type="evidence" value="ECO:0007669"/>
    <property type="project" value="UniProtKB-UniRule"/>
</dbReference>
<dbReference type="CDD" id="cd01667">
    <property type="entry name" value="TGS_ThrRS"/>
    <property type="match status" value="1"/>
</dbReference>
<dbReference type="CDD" id="cd00860">
    <property type="entry name" value="ThrRS_anticodon"/>
    <property type="match status" value="1"/>
</dbReference>
<dbReference type="CDD" id="cd00771">
    <property type="entry name" value="ThrRS_core"/>
    <property type="match status" value="1"/>
</dbReference>
<dbReference type="FunFam" id="3.10.20.30:FF:000005">
    <property type="entry name" value="Threonine--tRNA ligase"/>
    <property type="match status" value="1"/>
</dbReference>
<dbReference type="FunFam" id="3.30.54.20:FF:000002">
    <property type="entry name" value="Threonine--tRNA ligase"/>
    <property type="match status" value="1"/>
</dbReference>
<dbReference type="FunFam" id="3.30.930.10:FF:000002">
    <property type="entry name" value="Threonine--tRNA ligase"/>
    <property type="match status" value="1"/>
</dbReference>
<dbReference type="FunFam" id="3.40.50.800:FF:000001">
    <property type="entry name" value="Threonine--tRNA ligase"/>
    <property type="match status" value="1"/>
</dbReference>
<dbReference type="FunFam" id="3.30.980.10:FF:000005">
    <property type="entry name" value="Threonyl-tRNA synthetase, mitochondrial"/>
    <property type="match status" value="1"/>
</dbReference>
<dbReference type="Gene3D" id="3.10.20.30">
    <property type="match status" value="1"/>
</dbReference>
<dbReference type="Gene3D" id="3.30.54.20">
    <property type="match status" value="1"/>
</dbReference>
<dbReference type="Gene3D" id="3.40.50.800">
    <property type="entry name" value="Anticodon-binding domain"/>
    <property type="match status" value="1"/>
</dbReference>
<dbReference type="Gene3D" id="3.30.930.10">
    <property type="entry name" value="Bira Bifunctional Protein, Domain 2"/>
    <property type="match status" value="1"/>
</dbReference>
<dbReference type="Gene3D" id="3.30.980.10">
    <property type="entry name" value="Threonyl-trna Synthetase, Chain A, domain 2"/>
    <property type="match status" value="1"/>
</dbReference>
<dbReference type="HAMAP" id="MF_00184">
    <property type="entry name" value="Thr_tRNA_synth"/>
    <property type="match status" value="1"/>
</dbReference>
<dbReference type="InterPro" id="IPR002314">
    <property type="entry name" value="aa-tRNA-synt_IIb"/>
</dbReference>
<dbReference type="InterPro" id="IPR006195">
    <property type="entry name" value="aa-tRNA-synth_II"/>
</dbReference>
<dbReference type="InterPro" id="IPR045864">
    <property type="entry name" value="aa-tRNA-synth_II/BPL/LPL"/>
</dbReference>
<dbReference type="InterPro" id="IPR004154">
    <property type="entry name" value="Anticodon-bd"/>
</dbReference>
<dbReference type="InterPro" id="IPR036621">
    <property type="entry name" value="Anticodon-bd_dom_sf"/>
</dbReference>
<dbReference type="InterPro" id="IPR012675">
    <property type="entry name" value="Beta-grasp_dom_sf"/>
</dbReference>
<dbReference type="InterPro" id="IPR004095">
    <property type="entry name" value="TGS"/>
</dbReference>
<dbReference type="InterPro" id="IPR012676">
    <property type="entry name" value="TGS-like"/>
</dbReference>
<dbReference type="InterPro" id="IPR002320">
    <property type="entry name" value="Thr-tRNA-ligase_IIa"/>
</dbReference>
<dbReference type="InterPro" id="IPR018163">
    <property type="entry name" value="Thr/Ala-tRNA-synth_IIc_edit"/>
</dbReference>
<dbReference type="InterPro" id="IPR047246">
    <property type="entry name" value="ThrRS_anticodon"/>
</dbReference>
<dbReference type="InterPro" id="IPR033728">
    <property type="entry name" value="ThrRS_core"/>
</dbReference>
<dbReference type="InterPro" id="IPR012947">
    <property type="entry name" value="tRNA_SAD"/>
</dbReference>
<dbReference type="NCBIfam" id="TIGR00418">
    <property type="entry name" value="thrS"/>
    <property type="match status" value="1"/>
</dbReference>
<dbReference type="PANTHER" id="PTHR11451:SF44">
    <property type="entry name" value="THREONINE--TRNA LIGASE, CHLOROPLASTIC_MITOCHONDRIAL 2"/>
    <property type="match status" value="1"/>
</dbReference>
<dbReference type="PANTHER" id="PTHR11451">
    <property type="entry name" value="THREONINE-TRNA LIGASE"/>
    <property type="match status" value="1"/>
</dbReference>
<dbReference type="Pfam" id="PF03129">
    <property type="entry name" value="HGTP_anticodon"/>
    <property type="match status" value="1"/>
</dbReference>
<dbReference type="Pfam" id="PF02824">
    <property type="entry name" value="TGS"/>
    <property type="match status" value="1"/>
</dbReference>
<dbReference type="Pfam" id="PF00587">
    <property type="entry name" value="tRNA-synt_2b"/>
    <property type="match status" value="1"/>
</dbReference>
<dbReference type="Pfam" id="PF07973">
    <property type="entry name" value="tRNA_SAD"/>
    <property type="match status" value="1"/>
</dbReference>
<dbReference type="PRINTS" id="PR01047">
    <property type="entry name" value="TRNASYNTHTHR"/>
</dbReference>
<dbReference type="SMART" id="SM00863">
    <property type="entry name" value="tRNA_SAD"/>
    <property type="match status" value="1"/>
</dbReference>
<dbReference type="SUPFAM" id="SSF52954">
    <property type="entry name" value="Class II aaRS ABD-related"/>
    <property type="match status" value="1"/>
</dbReference>
<dbReference type="SUPFAM" id="SSF55681">
    <property type="entry name" value="Class II aaRS and biotin synthetases"/>
    <property type="match status" value="1"/>
</dbReference>
<dbReference type="SUPFAM" id="SSF81271">
    <property type="entry name" value="TGS-like"/>
    <property type="match status" value="1"/>
</dbReference>
<dbReference type="SUPFAM" id="SSF55186">
    <property type="entry name" value="ThrRS/AlaRS common domain"/>
    <property type="match status" value="1"/>
</dbReference>
<dbReference type="PROSITE" id="PS50862">
    <property type="entry name" value="AA_TRNA_LIGASE_II"/>
    <property type="match status" value="1"/>
</dbReference>
<dbReference type="PROSITE" id="PS51880">
    <property type="entry name" value="TGS"/>
    <property type="match status" value="1"/>
</dbReference>
<feature type="chain" id="PRO_1000098609" description="Threonine--tRNA ligase">
    <location>
        <begin position="1"/>
        <end position="642"/>
    </location>
</feature>
<feature type="domain" description="TGS" evidence="2">
    <location>
        <begin position="1"/>
        <end position="61"/>
    </location>
</feature>
<feature type="region of interest" description="Catalytic" evidence="1">
    <location>
        <begin position="243"/>
        <end position="534"/>
    </location>
</feature>
<feature type="binding site" evidence="1">
    <location>
        <position position="334"/>
    </location>
    <ligand>
        <name>Zn(2+)</name>
        <dbReference type="ChEBI" id="CHEBI:29105"/>
    </ligand>
</feature>
<feature type="binding site" evidence="1">
    <location>
        <position position="385"/>
    </location>
    <ligand>
        <name>Zn(2+)</name>
        <dbReference type="ChEBI" id="CHEBI:29105"/>
    </ligand>
</feature>
<feature type="binding site" evidence="1">
    <location>
        <position position="511"/>
    </location>
    <ligand>
        <name>Zn(2+)</name>
        <dbReference type="ChEBI" id="CHEBI:29105"/>
    </ligand>
</feature>
<gene>
    <name evidence="1" type="primary">thrS</name>
    <name type="ordered locus">SeHA_C1461</name>
</gene>
<protein>
    <recommendedName>
        <fullName evidence="1">Threonine--tRNA ligase</fullName>
        <ecNumber evidence="1">6.1.1.3</ecNumber>
    </recommendedName>
    <alternativeName>
        <fullName evidence="1">Threonyl-tRNA synthetase</fullName>
        <shortName evidence="1">ThrRS</shortName>
    </alternativeName>
</protein>
<evidence type="ECO:0000255" key="1">
    <source>
        <dbReference type="HAMAP-Rule" id="MF_00184"/>
    </source>
</evidence>
<evidence type="ECO:0000255" key="2">
    <source>
        <dbReference type="PROSITE-ProRule" id="PRU01228"/>
    </source>
</evidence>
<accession>B4TGH1</accession>
<sequence>MPVITLPDGSQRHYDHPVSPMDVALDIGPGLAKATIAGRVNGELVDASDLIENDATLSIITAKDEEGLEIIRHSCAHLLGHAIKQLWPHTKMAIGPVVDNGFYYDVDLDRTLTQEDVEALEKRMHELAEKNYDVIKKKVSWHDARETFVKRGETYKVAILDENIAHDDKPGLYHHEEYVDMCRGPHVPNMRFCHHFKLMKTAGAYWRGDSNNKMLQRIYGTAWADKKALNAYLQRLEEAAKRDHRKIGKQLDLYHMQEEAPGMVFWHNDGWTIFRELEVFVRSKLKEYQYQEVKGPFMMDRVLWEKTGHWDNYKDAMFTTSSENREYCIKPMNCPGHVQIFNQGLKSYRDLPLRMAEFGSCHRNEPSGALHGLMRVRGFTQDDAHIFCTEEQIRDEVNACIRMVYDMYSTFGFEKIVVKLSTRPDKRIGSDEMWDRAEADLAVALEENNIPFEYQLGEGAFYGPKIEFTLYDCLDRAWQCGTVQLDFSLPSRLSASYVGEDNERKVPVMIHRAILGSMERFIGILTEEFAGFFPTWLAPVQVVVMNITDSQSEYVNELTQKLQNAGIRVKADLRNEKIGFKIREHTLRRVPYMLVCGDKEVEAGKVAVRTRRGKDLGSLDVNDVIEKLQQEIRSRSLQQLEE</sequence>
<organism>
    <name type="scientific">Salmonella heidelberg (strain SL476)</name>
    <dbReference type="NCBI Taxonomy" id="454169"/>
    <lineage>
        <taxon>Bacteria</taxon>
        <taxon>Pseudomonadati</taxon>
        <taxon>Pseudomonadota</taxon>
        <taxon>Gammaproteobacteria</taxon>
        <taxon>Enterobacterales</taxon>
        <taxon>Enterobacteriaceae</taxon>
        <taxon>Salmonella</taxon>
    </lineage>
</organism>
<name>SYT_SALHS</name>
<proteinExistence type="inferred from homology"/>
<keyword id="KW-0030">Aminoacyl-tRNA synthetase</keyword>
<keyword id="KW-0067">ATP-binding</keyword>
<keyword id="KW-0963">Cytoplasm</keyword>
<keyword id="KW-0436">Ligase</keyword>
<keyword id="KW-0479">Metal-binding</keyword>
<keyword id="KW-0547">Nucleotide-binding</keyword>
<keyword id="KW-0648">Protein biosynthesis</keyword>
<keyword id="KW-0694">RNA-binding</keyword>
<keyword id="KW-0820">tRNA-binding</keyword>
<keyword id="KW-0862">Zinc</keyword>
<comment type="function">
    <text evidence="1">Catalyzes the attachment of threonine to tRNA(Thr) in a two-step reaction: L-threonine is first activated by ATP to form Thr-AMP and then transferred to the acceptor end of tRNA(Thr). Also edits incorrectly charged L-seryl-tRNA(Thr).</text>
</comment>
<comment type="catalytic activity">
    <reaction evidence="1">
        <text>tRNA(Thr) + L-threonine + ATP = L-threonyl-tRNA(Thr) + AMP + diphosphate + H(+)</text>
        <dbReference type="Rhea" id="RHEA:24624"/>
        <dbReference type="Rhea" id="RHEA-COMP:9670"/>
        <dbReference type="Rhea" id="RHEA-COMP:9704"/>
        <dbReference type="ChEBI" id="CHEBI:15378"/>
        <dbReference type="ChEBI" id="CHEBI:30616"/>
        <dbReference type="ChEBI" id="CHEBI:33019"/>
        <dbReference type="ChEBI" id="CHEBI:57926"/>
        <dbReference type="ChEBI" id="CHEBI:78442"/>
        <dbReference type="ChEBI" id="CHEBI:78534"/>
        <dbReference type="ChEBI" id="CHEBI:456215"/>
        <dbReference type="EC" id="6.1.1.3"/>
    </reaction>
</comment>
<comment type="cofactor">
    <cofactor evidence="1">
        <name>Zn(2+)</name>
        <dbReference type="ChEBI" id="CHEBI:29105"/>
    </cofactor>
    <text evidence="1">Binds 1 zinc ion per subunit.</text>
</comment>
<comment type="subunit">
    <text evidence="1">Homodimer.</text>
</comment>
<comment type="subcellular location">
    <subcellularLocation>
        <location evidence="1">Cytoplasm</location>
    </subcellularLocation>
</comment>
<comment type="similarity">
    <text evidence="1">Belongs to the class-II aminoacyl-tRNA synthetase family.</text>
</comment>
<reference key="1">
    <citation type="journal article" date="2011" name="J. Bacteriol.">
        <title>Comparative genomics of 28 Salmonella enterica isolates: evidence for CRISPR-mediated adaptive sublineage evolution.</title>
        <authorList>
            <person name="Fricke W.F."/>
            <person name="Mammel M.K."/>
            <person name="McDermott P.F."/>
            <person name="Tartera C."/>
            <person name="White D.G."/>
            <person name="Leclerc J.E."/>
            <person name="Ravel J."/>
            <person name="Cebula T.A."/>
        </authorList>
    </citation>
    <scope>NUCLEOTIDE SEQUENCE [LARGE SCALE GENOMIC DNA]</scope>
    <source>
        <strain>SL476</strain>
    </source>
</reference>